<evidence type="ECO:0000250" key="1"/>
<evidence type="ECO:0000305" key="2"/>
<proteinExistence type="inferred from homology"/>
<protein>
    <recommendedName>
        <fullName>DNA polymerase II small subunit</fullName>
        <shortName>Pol II</shortName>
        <ecNumber>2.7.7.7</ecNumber>
    </recommendedName>
    <alternativeName>
        <fullName>Exodeoxyribonuclease small subunit</fullName>
        <ecNumber>3.1.11.1</ecNumber>
    </alternativeName>
</protein>
<feature type="chain" id="PRO_0000096177" description="DNA polymerase II small subunit">
    <location>
        <begin position="1"/>
        <end position="594"/>
    </location>
</feature>
<sequence>MEIINKFLDLEALLSPTVYEKLKNFDEEKLKRLIQKIREFKKYNNAFILLDEKFLDIFLQKDLDEIINEYKDFDFIFYYTGEEEKEKPKEVKKEIKKETEEKIEKEKIEFVKKEEKEQFIKKSDEDVEEKLKQLISKEEKKEDFDAERAKRYEHITKIKESVNSRIKWIAKDIDAVIEIYEDSDVSGKSTCTGTIEDFVKYFRDRFERLKVFIERKAQRKGYPLKDIKKMKGQKDIFVVGIVSDVDSTRNGNLIVRIEDTEDEATLILPKEKIEAGKIPDDILLDEVIGAIGTVSKSGSSIYVDEIIRPALPPKEPKRIDEEIYMAFLSDIHVGSKEFLHKEFEKFIRFLNGDVDNELEEKVVSRLKYICIAGDLVDGVGVYPGQEEDLYEVDIIEQYREIAMYLDQIPEHISIIISPGNHDAVRPAEPQPKLPEKITKLFNRDNIYFVGNPCTLNIHGFDTLLYHGRSFDDLVGQIRAASYENPVTIMKELIKRRLLCPTYGGRCPIAPEHKDYLVIDRDIDILHTGHIHINGYGIYRGVVMVNSGTFQEQTDFQKRMGISPTPAIVPIINMAKVGEKGHYLEWDRGVLEVRY</sequence>
<comment type="function">
    <text evidence="1">Possesses two activities: a DNA synthesis (polymerase) and an exonucleolytic activity that degrades single-stranded DNA in the 3' to 5' direction. Has a template-primer preference which is characteristic of a replicative DNA polymerase (By similarity).</text>
</comment>
<comment type="catalytic activity">
    <reaction>
        <text>DNA(n) + a 2'-deoxyribonucleoside 5'-triphosphate = DNA(n+1) + diphosphate</text>
        <dbReference type="Rhea" id="RHEA:22508"/>
        <dbReference type="Rhea" id="RHEA-COMP:17339"/>
        <dbReference type="Rhea" id="RHEA-COMP:17340"/>
        <dbReference type="ChEBI" id="CHEBI:33019"/>
        <dbReference type="ChEBI" id="CHEBI:61560"/>
        <dbReference type="ChEBI" id="CHEBI:173112"/>
        <dbReference type="EC" id="2.7.7.7"/>
    </reaction>
</comment>
<comment type="catalytic activity">
    <reaction>
        <text>Exonucleolytic cleavage in the 3'- to 5'-direction to yield nucleoside 5'-phosphates.</text>
        <dbReference type="EC" id="3.1.11.1"/>
    </reaction>
</comment>
<comment type="subunit">
    <text evidence="1">Heterodimer of a large subunit and a small subunit.</text>
</comment>
<comment type="similarity">
    <text evidence="2">Belongs to the DNA polymerase delta/II small subunit family.</text>
</comment>
<gene>
    <name type="primary">polB</name>
    <name type="ordered locus">MJ0702</name>
</gene>
<name>DP2S_METJA</name>
<reference key="1">
    <citation type="journal article" date="1996" name="Science">
        <title>Complete genome sequence of the methanogenic archaeon, Methanococcus jannaschii.</title>
        <authorList>
            <person name="Bult C.J."/>
            <person name="White O."/>
            <person name="Olsen G.J."/>
            <person name="Zhou L."/>
            <person name="Fleischmann R.D."/>
            <person name="Sutton G.G."/>
            <person name="Blake J.A."/>
            <person name="FitzGerald L.M."/>
            <person name="Clayton R.A."/>
            <person name="Gocayne J.D."/>
            <person name="Kerlavage A.R."/>
            <person name="Dougherty B.A."/>
            <person name="Tomb J.-F."/>
            <person name="Adams M.D."/>
            <person name="Reich C.I."/>
            <person name="Overbeek R."/>
            <person name="Kirkness E.F."/>
            <person name="Weinstock K.G."/>
            <person name="Merrick J.M."/>
            <person name="Glodek A."/>
            <person name="Scott J.L."/>
            <person name="Geoghagen N.S.M."/>
            <person name="Weidman J.F."/>
            <person name="Fuhrmann J.L."/>
            <person name="Nguyen D."/>
            <person name="Utterback T.R."/>
            <person name="Kelley J.M."/>
            <person name="Peterson J.D."/>
            <person name="Sadow P.W."/>
            <person name="Hanna M.C."/>
            <person name="Cotton M.D."/>
            <person name="Roberts K.M."/>
            <person name="Hurst M.A."/>
            <person name="Kaine B.P."/>
            <person name="Borodovsky M."/>
            <person name="Klenk H.-P."/>
            <person name="Fraser C.M."/>
            <person name="Smith H.O."/>
            <person name="Woese C.R."/>
            <person name="Venter J.C."/>
        </authorList>
    </citation>
    <scope>NUCLEOTIDE SEQUENCE [LARGE SCALE GENOMIC DNA]</scope>
    <source>
        <strain>ATCC 43067 / DSM 2661 / JAL-1 / JCM 10045 / NBRC 100440</strain>
    </source>
</reference>
<accession>Q58113</accession>
<dbReference type="EC" id="2.7.7.7"/>
<dbReference type="EC" id="3.1.11.1"/>
<dbReference type="EMBL" id="L77117">
    <property type="protein sequence ID" value="AAB98694.1"/>
    <property type="molecule type" value="Genomic_DNA"/>
</dbReference>
<dbReference type="PIR" id="F64387">
    <property type="entry name" value="F64387"/>
</dbReference>
<dbReference type="RefSeq" id="WP_010870207.1">
    <property type="nucleotide sequence ID" value="NC_000909.1"/>
</dbReference>
<dbReference type="SMR" id="Q58113"/>
<dbReference type="FunCoup" id="Q58113">
    <property type="interactions" value="16"/>
</dbReference>
<dbReference type="STRING" id="243232.MJ_0702"/>
<dbReference type="PaxDb" id="243232-MJ_0702"/>
<dbReference type="DNASU" id="1451569"/>
<dbReference type="EnsemblBacteria" id="AAB98694">
    <property type="protein sequence ID" value="AAB98694"/>
    <property type="gene ID" value="MJ_0702"/>
</dbReference>
<dbReference type="GeneID" id="1451569"/>
<dbReference type="KEGG" id="mja:MJ_0702"/>
<dbReference type="eggNOG" id="arCOG04455">
    <property type="taxonomic scope" value="Archaea"/>
</dbReference>
<dbReference type="HOGENOM" id="CLU_027850_1_0_2"/>
<dbReference type="InParanoid" id="Q58113"/>
<dbReference type="OrthoDB" id="372039at2157"/>
<dbReference type="PhylomeDB" id="Q58113"/>
<dbReference type="Proteomes" id="UP000000805">
    <property type="component" value="Chromosome"/>
</dbReference>
<dbReference type="GO" id="GO:0042575">
    <property type="term" value="C:DNA polymerase complex"/>
    <property type="evidence" value="ECO:0000318"/>
    <property type="project" value="GO_Central"/>
</dbReference>
<dbReference type="GO" id="GO:0003677">
    <property type="term" value="F:DNA binding"/>
    <property type="evidence" value="ECO:0007669"/>
    <property type="project" value="UniProtKB-UniRule"/>
</dbReference>
<dbReference type="GO" id="GO:0003887">
    <property type="term" value="F:DNA-directed DNA polymerase activity"/>
    <property type="evidence" value="ECO:0007669"/>
    <property type="project" value="UniProtKB-UniRule"/>
</dbReference>
<dbReference type="GO" id="GO:0008310">
    <property type="term" value="F:single-stranded DNA 3'-5' DNA exonuclease activity"/>
    <property type="evidence" value="ECO:0007669"/>
    <property type="project" value="UniProtKB-EC"/>
</dbReference>
<dbReference type="GO" id="GO:0006308">
    <property type="term" value="P:DNA catabolic process"/>
    <property type="evidence" value="ECO:0007669"/>
    <property type="project" value="UniProtKB-UniRule"/>
</dbReference>
<dbReference type="GO" id="GO:0006271">
    <property type="term" value="P:DNA strand elongation involved in DNA replication"/>
    <property type="evidence" value="ECO:0000318"/>
    <property type="project" value="GO_Central"/>
</dbReference>
<dbReference type="CDD" id="cd07386">
    <property type="entry name" value="MPP_DNA_pol_II_small_archeal_C"/>
    <property type="match status" value="1"/>
</dbReference>
<dbReference type="CDD" id="cd04490">
    <property type="entry name" value="PolII_SU_OBF"/>
    <property type="match status" value="1"/>
</dbReference>
<dbReference type="FunFam" id="3.60.21.50:FF:000003">
    <property type="entry name" value="DNA polymerase II small subunit"/>
    <property type="match status" value="1"/>
</dbReference>
<dbReference type="Gene3D" id="3.60.21.50">
    <property type="match status" value="1"/>
</dbReference>
<dbReference type="HAMAP" id="MF_00325">
    <property type="entry name" value="DNApol_II_A_arch"/>
    <property type="match status" value="1"/>
</dbReference>
<dbReference type="InterPro" id="IPR004843">
    <property type="entry name" value="Calcineurin-like_PHP_ApaH"/>
</dbReference>
<dbReference type="InterPro" id="IPR024826">
    <property type="entry name" value="DNA_pol_delta/II_ssu"/>
</dbReference>
<dbReference type="InterPro" id="IPR029052">
    <property type="entry name" value="Metallo-depent_PP-like"/>
</dbReference>
<dbReference type="InterPro" id="IPR011149">
    <property type="entry name" value="Pol2_small_arc"/>
</dbReference>
<dbReference type="NCBIfam" id="NF003118">
    <property type="entry name" value="PRK04036.1-3"/>
    <property type="match status" value="1"/>
</dbReference>
<dbReference type="NCBIfam" id="NF003119">
    <property type="entry name" value="PRK04036.1-4"/>
    <property type="match status" value="1"/>
</dbReference>
<dbReference type="PANTHER" id="PTHR10416">
    <property type="entry name" value="DNA POLYMERASE DELTA SUBUNIT 2"/>
    <property type="match status" value="1"/>
</dbReference>
<dbReference type="PANTHER" id="PTHR10416:SF0">
    <property type="entry name" value="DNA POLYMERASE DELTA SUBUNIT 2"/>
    <property type="match status" value="1"/>
</dbReference>
<dbReference type="Pfam" id="PF00149">
    <property type="entry name" value="Metallophos"/>
    <property type="match status" value="1"/>
</dbReference>
<dbReference type="PIRSF" id="PIRSF000803">
    <property type="entry name" value="Arc_Pol2_small"/>
    <property type="match status" value="1"/>
</dbReference>
<dbReference type="SUPFAM" id="SSF56300">
    <property type="entry name" value="Metallo-dependent phosphatases"/>
    <property type="match status" value="1"/>
</dbReference>
<keyword id="KW-0235">DNA replication</keyword>
<keyword id="KW-0238">DNA-binding</keyword>
<keyword id="KW-0239">DNA-directed DNA polymerase</keyword>
<keyword id="KW-0269">Exonuclease</keyword>
<keyword id="KW-0378">Hydrolase</keyword>
<keyword id="KW-0511">Multifunctional enzyme</keyword>
<keyword id="KW-0540">Nuclease</keyword>
<keyword id="KW-0548">Nucleotidyltransferase</keyword>
<keyword id="KW-1185">Reference proteome</keyword>
<keyword id="KW-0808">Transferase</keyword>
<organism>
    <name type="scientific">Methanocaldococcus jannaschii (strain ATCC 43067 / DSM 2661 / JAL-1 / JCM 10045 / NBRC 100440)</name>
    <name type="common">Methanococcus jannaschii</name>
    <dbReference type="NCBI Taxonomy" id="243232"/>
    <lineage>
        <taxon>Archaea</taxon>
        <taxon>Methanobacteriati</taxon>
        <taxon>Methanobacteriota</taxon>
        <taxon>Methanomada group</taxon>
        <taxon>Methanococci</taxon>
        <taxon>Methanococcales</taxon>
        <taxon>Methanocaldococcaceae</taxon>
        <taxon>Methanocaldococcus</taxon>
    </lineage>
</organism>